<protein>
    <recommendedName>
        <fullName evidence="1">Large ribosomal subunit protein bL27</fullName>
    </recommendedName>
    <alternativeName>
        <fullName evidence="2">50S ribosomal protein L27</fullName>
    </alternativeName>
</protein>
<sequence length="84" mass="9096">MAHKKAGGSTRNGRDSNAQRLGVKCFGGQLISAGSIIVKQRGTKFHPGKNVGCGKDHTIFAIVKGKVEFKKKGLKKRTYINIIN</sequence>
<gene>
    <name evidence="1" type="primary">rpmA</name>
    <name type="ordered locus">BUAPTUC7_382</name>
</gene>
<comment type="similarity">
    <text evidence="1">Belongs to the bacterial ribosomal protein bL27 family.</text>
</comment>
<reference key="1">
    <citation type="journal article" date="2009" name="Science">
        <title>The dynamics and time scale of ongoing genomic erosion in symbiotic bacteria.</title>
        <authorList>
            <person name="Moran N.A."/>
            <person name="McLaughlin H.J."/>
            <person name="Sorek R."/>
        </authorList>
    </citation>
    <scope>NUCLEOTIDE SEQUENCE [LARGE SCALE GENOMIC DNA]</scope>
    <source>
        <strain>Tuc7</strain>
    </source>
</reference>
<dbReference type="EMBL" id="CP001158">
    <property type="protein sequence ID" value="ACL30188.1"/>
    <property type="molecule type" value="Genomic_DNA"/>
</dbReference>
<dbReference type="RefSeq" id="WP_009874345.1">
    <property type="nucleotide sequence ID" value="NC_011834.1"/>
</dbReference>
<dbReference type="SMR" id="B8D7S3"/>
<dbReference type="KEGG" id="bau:BUAPTUC7_382"/>
<dbReference type="HOGENOM" id="CLU_095424_4_1_6"/>
<dbReference type="GO" id="GO:0022625">
    <property type="term" value="C:cytosolic large ribosomal subunit"/>
    <property type="evidence" value="ECO:0007669"/>
    <property type="project" value="TreeGrafter"/>
</dbReference>
<dbReference type="GO" id="GO:0003735">
    <property type="term" value="F:structural constituent of ribosome"/>
    <property type="evidence" value="ECO:0007669"/>
    <property type="project" value="InterPro"/>
</dbReference>
<dbReference type="GO" id="GO:0006412">
    <property type="term" value="P:translation"/>
    <property type="evidence" value="ECO:0007669"/>
    <property type="project" value="UniProtKB-UniRule"/>
</dbReference>
<dbReference type="FunFam" id="2.40.50.100:FF:000020">
    <property type="entry name" value="50S ribosomal protein L27"/>
    <property type="match status" value="1"/>
</dbReference>
<dbReference type="Gene3D" id="2.40.50.100">
    <property type="match status" value="1"/>
</dbReference>
<dbReference type="HAMAP" id="MF_00539">
    <property type="entry name" value="Ribosomal_bL27"/>
    <property type="match status" value="1"/>
</dbReference>
<dbReference type="InterPro" id="IPR001684">
    <property type="entry name" value="Ribosomal_bL27"/>
</dbReference>
<dbReference type="NCBIfam" id="TIGR00062">
    <property type="entry name" value="L27"/>
    <property type="match status" value="1"/>
</dbReference>
<dbReference type="PANTHER" id="PTHR15893:SF0">
    <property type="entry name" value="LARGE RIBOSOMAL SUBUNIT PROTEIN BL27M"/>
    <property type="match status" value="1"/>
</dbReference>
<dbReference type="PANTHER" id="PTHR15893">
    <property type="entry name" value="RIBOSOMAL PROTEIN L27"/>
    <property type="match status" value="1"/>
</dbReference>
<dbReference type="Pfam" id="PF01016">
    <property type="entry name" value="Ribosomal_L27"/>
    <property type="match status" value="1"/>
</dbReference>
<dbReference type="PRINTS" id="PR00063">
    <property type="entry name" value="RIBOSOMALL27"/>
</dbReference>
<dbReference type="SUPFAM" id="SSF110324">
    <property type="entry name" value="Ribosomal L27 protein-like"/>
    <property type="match status" value="1"/>
</dbReference>
<organism>
    <name type="scientific">Buchnera aphidicola subsp. Acyrthosiphon pisum (strain Tuc7)</name>
    <dbReference type="NCBI Taxonomy" id="561501"/>
    <lineage>
        <taxon>Bacteria</taxon>
        <taxon>Pseudomonadati</taxon>
        <taxon>Pseudomonadota</taxon>
        <taxon>Gammaproteobacteria</taxon>
        <taxon>Enterobacterales</taxon>
        <taxon>Erwiniaceae</taxon>
        <taxon>Buchnera</taxon>
    </lineage>
</organism>
<keyword id="KW-0687">Ribonucleoprotein</keyword>
<keyword id="KW-0689">Ribosomal protein</keyword>
<accession>B8D7S3</accession>
<feature type="chain" id="PRO_1000146515" description="Large ribosomal subunit protein bL27">
    <location>
        <begin position="1"/>
        <end position="84"/>
    </location>
</feature>
<proteinExistence type="inferred from homology"/>
<name>RL27_BUCAT</name>
<evidence type="ECO:0000255" key="1">
    <source>
        <dbReference type="HAMAP-Rule" id="MF_00539"/>
    </source>
</evidence>
<evidence type="ECO:0000305" key="2"/>